<name>TRHO_STAA3</name>
<sequence length="318" mass="37058">MNYQVLLYYKYMTIDDPEQFAQDHLAFCKAHHLKGRILVSTEGINGTLSGTKEETEQYMAHMHADERFKDMVFKIDEAEGHAFKKMHVRPRKEIVALDLEDDVDPRHTTGQYLSPVEFRKALEDDDTVIIDARNDYEFDLGHFRGAIRPNITRFRDLPDWIKENKALFADKKVVTYCTGGIRCEKFSGWLLKEGFEDVAQLHGGIATYGKDPETKGEYWDGKMYVFDDRISVDINQVEKTIIGKDWFDGKPCERYINCANPECNKQILVSEENETKYLGACSYECAKHERNRYVQANNISDNEWQQRLTNFDDLHQHA</sequence>
<gene>
    <name evidence="1" type="primary">trhO</name>
    <name type="ordered locus">SAUSA300_2622</name>
</gene>
<dbReference type="EC" id="1.14.-.-" evidence="1"/>
<dbReference type="EMBL" id="CP000255">
    <property type="protein sequence ID" value="ABD21734.1"/>
    <property type="molecule type" value="Genomic_DNA"/>
</dbReference>
<dbReference type="RefSeq" id="WP_001109273.1">
    <property type="nucleotide sequence ID" value="NZ_CP027476.1"/>
</dbReference>
<dbReference type="SMR" id="Q2FDH2"/>
<dbReference type="KEGG" id="saa:SAUSA300_2622"/>
<dbReference type="HOGENOM" id="CLU_038878_1_0_9"/>
<dbReference type="OMA" id="CDTHTNC"/>
<dbReference type="Proteomes" id="UP000001939">
    <property type="component" value="Chromosome"/>
</dbReference>
<dbReference type="GO" id="GO:0016705">
    <property type="term" value="F:oxidoreductase activity, acting on paired donors, with incorporation or reduction of molecular oxygen"/>
    <property type="evidence" value="ECO:0007669"/>
    <property type="project" value="UniProtKB-UniRule"/>
</dbReference>
<dbReference type="GO" id="GO:0006400">
    <property type="term" value="P:tRNA modification"/>
    <property type="evidence" value="ECO:0007669"/>
    <property type="project" value="UniProtKB-UniRule"/>
</dbReference>
<dbReference type="CDD" id="cd01518">
    <property type="entry name" value="RHOD_YceA"/>
    <property type="match status" value="1"/>
</dbReference>
<dbReference type="Gene3D" id="3.30.70.100">
    <property type="match status" value="1"/>
</dbReference>
<dbReference type="Gene3D" id="3.40.250.10">
    <property type="entry name" value="Rhodanese-like domain"/>
    <property type="match status" value="1"/>
</dbReference>
<dbReference type="HAMAP" id="MF_00469">
    <property type="entry name" value="TrhO"/>
    <property type="match status" value="1"/>
</dbReference>
<dbReference type="InterPro" id="IPR001763">
    <property type="entry name" value="Rhodanese-like_dom"/>
</dbReference>
<dbReference type="InterPro" id="IPR036873">
    <property type="entry name" value="Rhodanese-like_dom_sf"/>
</dbReference>
<dbReference type="InterPro" id="IPR022111">
    <property type="entry name" value="Rhodanese_C"/>
</dbReference>
<dbReference type="InterPro" id="IPR020936">
    <property type="entry name" value="TrhO"/>
</dbReference>
<dbReference type="InterPro" id="IPR040503">
    <property type="entry name" value="TRHO_N"/>
</dbReference>
<dbReference type="NCBIfam" id="NF001135">
    <property type="entry name" value="PRK00142.1-3"/>
    <property type="match status" value="1"/>
</dbReference>
<dbReference type="PANTHER" id="PTHR43268:SF3">
    <property type="entry name" value="RHODANESE-LIKE DOMAIN-CONTAINING PROTEIN 7-RELATED"/>
    <property type="match status" value="1"/>
</dbReference>
<dbReference type="PANTHER" id="PTHR43268">
    <property type="entry name" value="THIOSULFATE SULFURTRANSFERASE/RHODANESE-LIKE DOMAIN-CONTAINING PROTEIN 2"/>
    <property type="match status" value="1"/>
</dbReference>
<dbReference type="Pfam" id="PF00581">
    <property type="entry name" value="Rhodanese"/>
    <property type="match status" value="1"/>
</dbReference>
<dbReference type="Pfam" id="PF12368">
    <property type="entry name" value="Rhodanese_C"/>
    <property type="match status" value="1"/>
</dbReference>
<dbReference type="Pfam" id="PF17773">
    <property type="entry name" value="UPF0176_N"/>
    <property type="match status" value="1"/>
</dbReference>
<dbReference type="SMART" id="SM00450">
    <property type="entry name" value="RHOD"/>
    <property type="match status" value="1"/>
</dbReference>
<dbReference type="SUPFAM" id="SSF52821">
    <property type="entry name" value="Rhodanese/Cell cycle control phosphatase"/>
    <property type="match status" value="1"/>
</dbReference>
<dbReference type="PROSITE" id="PS50206">
    <property type="entry name" value="RHODANESE_3"/>
    <property type="match status" value="1"/>
</dbReference>
<organism>
    <name type="scientific">Staphylococcus aureus (strain USA300)</name>
    <dbReference type="NCBI Taxonomy" id="367830"/>
    <lineage>
        <taxon>Bacteria</taxon>
        <taxon>Bacillati</taxon>
        <taxon>Bacillota</taxon>
        <taxon>Bacilli</taxon>
        <taxon>Bacillales</taxon>
        <taxon>Staphylococcaceae</taxon>
        <taxon>Staphylococcus</taxon>
    </lineage>
</organism>
<comment type="function">
    <text evidence="1">Catalyzes oxygen-dependent 5-hydroxyuridine (ho5U) modification at position 34 in tRNAs.</text>
</comment>
<comment type="catalytic activity">
    <reaction evidence="1">
        <text>uridine(34) in tRNA + AH2 + O2 = 5-hydroxyuridine(34) in tRNA + A + H2O</text>
        <dbReference type="Rhea" id="RHEA:64224"/>
        <dbReference type="Rhea" id="RHEA-COMP:11727"/>
        <dbReference type="Rhea" id="RHEA-COMP:13381"/>
        <dbReference type="ChEBI" id="CHEBI:13193"/>
        <dbReference type="ChEBI" id="CHEBI:15377"/>
        <dbReference type="ChEBI" id="CHEBI:15379"/>
        <dbReference type="ChEBI" id="CHEBI:17499"/>
        <dbReference type="ChEBI" id="CHEBI:65315"/>
        <dbReference type="ChEBI" id="CHEBI:136877"/>
    </reaction>
</comment>
<comment type="similarity">
    <text evidence="1">Belongs to the TrhO family.</text>
</comment>
<protein>
    <recommendedName>
        <fullName evidence="1">tRNA uridine(34) hydroxylase</fullName>
        <ecNumber evidence="1">1.14.-.-</ecNumber>
    </recommendedName>
    <alternativeName>
        <fullName evidence="1">tRNA hydroxylation protein O</fullName>
    </alternativeName>
</protein>
<keyword id="KW-0560">Oxidoreductase</keyword>
<keyword id="KW-0819">tRNA processing</keyword>
<accession>Q2FDH2</accession>
<proteinExistence type="inferred from homology"/>
<evidence type="ECO:0000255" key="1">
    <source>
        <dbReference type="HAMAP-Rule" id="MF_00469"/>
    </source>
</evidence>
<reference key="1">
    <citation type="journal article" date="2006" name="Lancet">
        <title>Complete genome sequence of USA300, an epidemic clone of community-acquired meticillin-resistant Staphylococcus aureus.</title>
        <authorList>
            <person name="Diep B.A."/>
            <person name="Gill S.R."/>
            <person name="Chang R.F."/>
            <person name="Phan T.H."/>
            <person name="Chen J.H."/>
            <person name="Davidson M.G."/>
            <person name="Lin F."/>
            <person name="Lin J."/>
            <person name="Carleton H.A."/>
            <person name="Mongodin E.F."/>
            <person name="Sensabaugh G.F."/>
            <person name="Perdreau-Remington F."/>
        </authorList>
    </citation>
    <scope>NUCLEOTIDE SEQUENCE [LARGE SCALE GENOMIC DNA]</scope>
    <source>
        <strain>USA300</strain>
    </source>
</reference>
<feature type="chain" id="PRO_0000242946" description="tRNA uridine(34) hydroxylase">
    <location>
        <begin position="1"/>
        <end position="318"/>
    </location>
</feature>
<feature type="domain" description="Rhodanese" evidence="1">
    <location>
        <begin position="123"/>
        <end position="217"/>
    </location>
</feature>
<feature type="active site" description="Cysteine persulfide intermediate" evidence="1">
    <location>
        <position position="177"/>
    </location>
</feature>